<gene>
    <name evidence="1" type="primary">pdxH</name>
    <name type="ordered locus">Fjoh_4542</name>
</gene>
<protein>
    <recommendedName>
        <fullName evidence="1">Pyridoxine/pyridoxamine 5'-phosphate oxidase</fullName>
        <ecNumber evidence="1">1.4.3.5</ecNumber>
    </recommendedName>
    <alternativeName>
        <fullName evidence="1">PNP/PMP oxidase</fullName>
        <shortName evidence="1">PNPOx</shortName>
    </alternativeName>
    <alternativeName>
        <fullName evidence="1">Pyridoxal 5'-phosphate synthase</fullName>
    </alternativeName>
</protein>
<feature type="chain" id="PRO_0000335784" description="Pyridoxine/pyridoxamine 5'-phosphate oxidase">
    <location>
        <begin position="1"/>
        <end position="214"/>
    </location>
</feature>
<feature type="binding site" evidence="1">
    <location>
        <begin position="8"/>
        <end position="11"/>
    </location>
    <ligand>
        <name>substrate</name>
    </ligand>
</feature>
<feature type="binding site" evidence="1">
    <location>
        <begin position="62"/>
        <end position="67"/>
    </location>
    <ligand>
        <name>FMN</name>
        <dbReference type="ChEBI" id="CHEBI:58210"/>
    </ligand>
</feature>
<feature type="binding site" evidence="1">
    <location>
        <position position="67"/>
    </location>
    <ligand>
        <name>substrate</name>
    </ligand>
</feature>
<feature type="binding site" evidence="1">
    <location>
        <begin position="77"/>
        <end position="78"/>
    </location>
    <ligand>
        <name>FMN</name>
        <dbReference type="ChEBI" id="CHEBI:58210"/>
    </ligand>
</feature>
<feature type="binding site" evidence="1">
    <location>
        <position position="84"/>
    </location>
    <ligand>
        <name>FMN</name>
        <dbReference type="ChEBI" id="CHEBI:58210"/>
    </ligand>
</feature>
<feature type="binding site" evidence="1">
    <location>
        <position position="106"/>
    </location>
    <ligand>
        <name>FMN</name>
        <dbReference type="ChEBI" id="CHEBI:58210"/>
    </ligand>
</feature>
<feature type="binding site" evidence="1">
    <location>
        <position position="124"/>
    </location>
    <ligand>
        <name>substrate</name>
    </ligand>
</feature>
<feature type="binding site" evidence="1">
    <location>
        <position position="128"/>
    </location>
    <ligand>
        <name>substrate</name>
    </ligand>
</feature>
<feature type="binding site" evidence="1">
    <location>
        <position position="132"/>
    </location>
    <ligand>
        <name>substrate</name>
    </ligand>
</feature>
<feature type="binding site" evidence="1">
    <location>
        <begin position="141"/>
        <end position="142"/>
    </location>
    <ligand>
        <name>FMN</name>
        <dbReference type="ChEBI" id="CHEBI:58210"/>
    </ligand>
</feature>
<feature type="binding site" evidence="1">
    <location>
        <position position="186"/>
    </location>
    <ligand>
        <name>FMN</name>
        <dbReference type="ChEBI" id="CHEBI:58210"/>
    </ligand>
</feature>
<feature type="binding site" evidence="1">
    <location>
        <begin position="192"/>
        <end position="194"/>
    </location>
    <ligand>
        <name>substrate</name>
    </ligand>
</feature>
<feature type="binding site" evidence="1">
    <location>
        <position position="196"/>
    </location>
    <ligand>
        <name>FMN</name>
        <dbReference type="ChEBI" id="CHEBI:58210"/>
    </ligand>
</feature>
<name>PDXH_FLAJ1</name>
<dbReference type="EC" id="1.4.3.5" evidence="1"/>
<dbReference type="EMBL" id="CP000685">
    <property type="protein sequence ID" value="ABQ07541.1"/>
    <property type="molecule type" value="Genomic_DNA"/>
</dbReference>
<dbReference type="RefSeq" id="WP_012026507.1">
    <property type="nucleotide sequence ID" value="NC_009441.1"/>
</dbReference>
<dbReference type="SMR" id="A5FB76"/>
<dbReference type="STRING" id="376686.Fjoh_4542"/>
<dbReference type="KEGG" id="fjo:Fjoh_4542"/>
<dbReference type="eggNOG" id="COG0259">
    <property type="taxonomic scope" value="Bacteria"/>
</dbReference>
<dbReference type="HOGENOM" id="CLU_032263_2_2_10"/>
<dbReference type="OrthoDB" id="9780392at2"/>
<dbReference type="UniPathway" id="UPA01068">
    <property type="reaction ID" value="UER00304"/>
</dbReference>
<dbReference type="UniPathway" id="UPA01068">
    <property type="reaction ID" value="UER00305"/>
</dbReference>
<dbReference type="Proteomes" id="UP000006694">
    <property type="component" value="Chromosome"/>
</dbReference>
<dbReference type="GO" id="GO:0010181">
    <property type="term" value="F:FMN binding"/>
    <property type="evidence" value="ECO:0007669"/>
    <property type="project" value="UniProtKB-UniRule"/>
</dbReference>
<dbReference type="GO" id="GO:0004733">
    <property type="term" value="F:pyridoxamine phosphate oxidase activity"/>
    <property type="evidence" value="ECO:0007669"/>
    <property type="project" value="UniProtKB-UniRule"/>
</dbReference>
<dbReference type="GO" id="GO:0008615">
    <property type="term" value="P:pyridoxine biosynthetic process"/>
    <property type="evidence" value="ECO:0007669"/>
    <property type="project" value="UniProtKB-KW"/>
</dbReference>
<dbReference type="FunFam" id="2.30.110.10:FF:000020">
    <property type="entry name" value="PNPO isoform 11"/>
    <property type="match status" value="1"/>
</dbReference>
<dbReference type="Gene3D" id="2.30.110.10">
    <property type="entry name" value="Electron Transport, Fmn-binding Protein, Chain A"/>
    <property type="match status" value="1"/>
</dbReference>
<dbReference type="HAMAP" id="MF_01629">
    <property type="entry name" value="PdxH"/>
    <property type="match status" value="1"/>
</dbReference>
<dbReference type="InterPro" id="IPR000659">
    <property type="entry name" value="Pyridox_Oxase"/>
</dbReference>
<dbReference type="InterPro" id="IPR019740">
    <property type="entry name" value="Pyridox_Oxase_CS"/>
</dbReference>
<dbReference type="InterPro" id="IPR011576">
    <property type="entry name" value="Pyridox_Oxase_N"/>
</dbReference>
<dbReference type="InterPro" id="IPR019576">
    <property type="entry name" value="Pyridoxamine_oxidase_dimer_C"/>
</dbReference>
<dbReference type="InterPro" id="IPR012349">
    <property type="entry name" value="Split_barrel_FMN-bd"/>
</dbReference>
<dbReference type="NCBIfam" id="TIGR00558">
    <property type="entry name" value="pdxH"/>
    <property type="match status" value="1"/>
</dbReference>
<dbReference type="NCBIfam" id="NF004231">
    <property type="entry name" value="PRK05679.1"/>
    <property type="match status" value="1"/>
</dbReference>
<dbReference type="PANTHER" id="PTHR10851:SF0">
    <property type="entry name" value="PYRIDOXINE-5'-PHOSPHATE OXIDASE"/>
    <property type="match status" value="1"/>
</dbReference>
<dbReference type="PANTHER" id="PTHR10851">
    <property type="entry name" value="PYRIDOXINE-5-PHOSPHATE OXIDASE"/>
    <property type="match status" value="1"/>
</dbReference>
<dbReference type="Pfam" id="PF10590">
    <property type="entry name" value="PNP_phzG_C"/>
    <property type="match status" value="1"/>
</dbReference>
<dbReference type="Pfam" id="PF01243">
    <property type="entry name" value="PNPOx_N"/>
    <property type="match status" value="1"/>
</dbReference>
<dbReference type="PIRSF" id="PIRSF000190">
    <property type="entry name" value="Pyd_amn-ph_oxd"/>
    <property type="match status" value="1"/>
</dbReference>
<dbReference type="SUPFAM" id="SSF50475">
    <property type="entry name" value="FMN-binding split barrel"/>
    <property type="match status" value="1"/>
</dbReference>
<dbReference type="PROSITE" id="PS01064">
    <property type="entry name" value="PYRIDOX_OXIDASE"/>
    <property type="match status" value="1"/>
</dbReference>
<sequence length="214" mass="24671">MNDLSNYRKSYEKSELLETNIPEDPINLFNRWFHEVEDFGGSGEVNAMTVSTIGLDGFPKSRVVLLKKFSEEGFIFYTNYNSEKGKAIEANPNVCLSFFWQEAERQVIIKGIAQKTSEIISDNYFDSRPDGSKLGAIVSHQSEVIPSRTFLEENLKKLEAEFEGKPIPRPENWGGYLVTPLQVEFWQGRPNRLHDRIRYTSQSDFSWTIERLSS</sequence>
<organism>
    <name type="scientific">Flavobacterium johnsoniae (strain ATCC 17061 / DSM 2064 / JCM 8514 / BCRC 14874 / CCUG 350202 / NBRC 14942 / NCIMB 11054 / UW101)</name>
    <name type="common">Cytophaga johnsonae</name>
    <dbReference type="NCBI Taxonomy" id="376686"/>
    <lineage>
        <taxon>Bacteria</taxon>
        <taxon>Pseudomonadati</taxon>
        <taxon>Bacteroidota</taxon>
        <taxon>Flavobacteriia</taxon>
        <taxon>Flavobacteriales</taxon>
        <taxon>Flavobacteriaceae</taxon>
        <taxon>Flavobacterium</taxon>
    </lineage>
</organism>
<accession>A5FB76</accession>
<reference key="1">
    <citation type="journal article" date="2009" name="Appl. Environ. Microbiol.">
        <title>Novel features of the polysaccharide-digesting gliding bacterium Flavobacterium johnsoniae as revealed by genome sequence analysis.</title>
        <authorList>
            <person name="McBride M.J."/>
            <person name="Xie G."/>
            <person name="Martens E.C."/>
            <person name="Lapidus A."/>
            <person name="Henrissat B."/>
            <person name="Rhodes R.G."/>
            <person name="Goltsman E."/>
            <person name="Wang W."/>
            <person name="Xu J."/>
            <person name="Hunnicutt D.W."/>
            <person name="Staroscik A.M."/>
            <person name="Hoover T.R."/>
            <person name="Cheng Y.Q."/>
            <person name="Stein J.L."/>
        </authorList>
    </citation>
    <scope>NUCLEOTIDE SEQUENCE [LARGE SCALE GENOMIC DNA]</scope>
    <source>
        <strain>ATCC 17061 / DSM 2064 / JCM 8514 / BCRC 14874 / CCUG 350202 / NBRC 14942 / NCIMB 11054 / UW101</strain>
    </source>
</reference>
<evidence type="ECO:0000255" key="1">
    <source>
        <dbReference type="HAMAP-Rule" id="MF_01629"/>
    </source>
</evidence>
<keyword id="KW-0285">Flavoprotein</keyword>
<keyword id="KW-0288">FMN</keyword>
<keyword id="KW-0560">Oxidoreductase</keyword>
<keyword id="KW-0664">Pyridoxine biosynthesis</keyword>
<proteinExistence type="inferred from homology"/>
<comment type="function">
    <text evidence="1">Catalyzes the oxidation of either pyridoxine 5'-phosphate (PNP) or pyridoxamine 5'-phosphate (PMP) into pyridoxal 5'-phosphate (PLP).</text>
</comment>
<comment type="catalytic activity">
    <reaction evidence="1">
        <text>pyridoxamine 5'-phosphate + O2 + H2O = pyridoxal 5'-phosphate + H2O2 + NH4(+)</text>
        <dbReference type="Rhea" id="RHEA:15817"/>
        <dbReference type="ChEBI" id="CHEBI:15377"/>
        <dbReference type="ChEBI" id="CHEBI:15379"/>
        <dbReference type="ChEBI" id="CHEBI:16240"/>
        <dbReference type="ChEBI" id="CHEBI:28938"/>
        <dbReference type="ChEBI" id="CHEBI:58451"/>
        <dbReference type="ChEBI" id="CHEBI:597326"/>
        <dbReference type="EC" id="1.4.3.5"/>
    </reaction>
</comment>
<comment type="catalytic activity">
    <reaction evidence="1">
        <text>pyridoxine 5'-phosphate + O2 = pyridoxal 5'-phosphate + H2O2</text>
        <dbReference type="Rhea" id="RHEA:15149"/>
        <dbReference type="ChEBI" id="CHEBI:15379"/>
        <dbReference type="ChEBI" id="CHEBI:16240"/>
        <dbReference type="ChEBI" id="CHEBI:58589"/>
        <dbReference type="ChEBI" id="CHEBI:597326"/>
        <dbReference type="EC" id="1.4.3.5"/>
    </reaction>
</comment>
<comment type="cofactor">
    <cofactor evidence="1">
        <name>FMN</name>
        <dbReference type="ChEBI" id="CHEBI:58210"/>
    </cofactor>
    <text evidence="1">Binds 1 FMN per subunit.</text>
</comment>
<comment type="pathway">
    <text evidence="1">Cofactor metabolism; pyridoxal 5'-phosphate salvage; pyridoxal 5'-phosphate from pyridoxamine 5'-phosphate: step 1/1.</text>
</comment>
<comment type="pathway">
    <text evidence="1">Cofactor metabolism; pyridoxal 5'-phosphate salvage; pyridoxal 5'-phosphate from pyridoxine 5'-phosphate: step 1/1.</text>
</comment>
<comment type="subunit">
    <text evidence="1">Homodimer.</text>
</comment>
<comment type="similarity">
    <text evidence="1">Belongs to the pyridoxamine 5'-phosphate oxidase family.</text>
</comment>